<gene>
    <name evidence="1" type="primary">adkA</name>
    <name type="ordered locus">TK1517</name>
</gene>
<sequence length="196" mass="22138">MPFVVVITGIPGVGKSTITKLALKKTRAKFRLVNFGDLMFEEAVNMGLVKHRDEMRKLDPLTQKELQLKVAQRIVEIARKEPVLLDTHATIRTPAGYLLGFPREVIEILNPNFIVIIEAAPSEILGRRLRDLKRDRDVETEEQIARHQDLNRAAAIAYAMHSNALIKIIENHEDKGLEEAVNELVKVLDLAVSEYA</sequence>
<dbReference type="EC" id="2.7.4.3" evidence="1"/>
<dbReference type="EMBL" id="AP006878">
    <property type="protein sequence ID" value="BAD85706.1"/>
    <property type="molecule type" value="Genomic_DNA"/>
</dbReference>
<dbReference type="RefSeq" id="WP_011250468.1">
    <property type="nucleotide sequence ID" value="NC_006624.1"/>
</dbReference>
<dbReference type="SMR" id="Q5JJH2"/>
<dbReference type="FunCoup" id="Q5JJH2">
    <property type="interactions" value="67"/>
</dbReference>
<dbReference type="IntAct" id="Q5JJH2">
    <property type="interactions" value="1"/>
</dbReference>
<dbReference type="MINT" id="Q5JJH2"/>
<dbReference type="STRING" id="69014.TK1517"/>
<dbReference type="EnsemblBacteria" id="BAD85706">
    <property type="protein sequence ID" value="BAD85706"/>
    <property type="gene ID" value="TK1517"/>
</dbReference>
<dbReference type="GeneID" id="78448045"/>
<dbReference type="KEGG" id="tko:TK1517"/>
<dbReference type="PATRIC" id="fig|69014.16.peg.1477"/>
<dbReference type="eggNOG" id="arCOG01039">
    <property type="taxonomic scope" value="Archaea"/>
</dbReference>
<dbReference type="HOGENOM" id="CLU_119371_0_0_2"/>
<dbReference type="InParanoid" id="Q5JJH2"/>
<dbReference type="OrthoDB" id="26198at2157"/>
<dbReference type="PhylomeDB" id="Q5JJH2"/>
<dbReference type="Proteomes" id="UP000000536">
    <property type="component" value="Chromosome"/>
</dbReference>
<dbReference type="GO" id="GO:0005737">
    <property type="term" value="C:cytoplasm"/>
    <property type="evidence" value="ECO:0007669"/>
    <property type="project" value="UniProtKB-SubCell"/>
</dbReference>
<dbReference type="GO" id="GO:0004017">
    <property type="term" value="F:adenylate kinase activity"/>
    <property type="evidence" value="ECO:0007669"/>
    <property type="project" value="UniProtKB-UniRule"/>
</dbReference>
<dbReference type="GO" id="GO:0005524">
    <property type="term" value="F:ATP binding"/>
    <property type="evidence" value="ECO:0007669"/>
    <property type="project" value="UniProtKB-UniRule"/>
</dbReference>
<dbReference type="Gene3D" id="3.40.50.300">
    <property type="entry name" value="P-loop containing nucleotide triphosphate hydrolases"/>
    <property type="match status" value="1"/>
</dbReference>
<dbReference type="HAMAP" id="MF_00234">
    <property type="entry name" value="Adenylate_kinase_AdkA"/>
    <property type="match status" value="1"/>
</dbReference>
<dbReference type="InterPro" id="IPR023477">
    <property type="entry name" value="Adenylate_kinase_AdkA"/>
</dbReference>
<dbReference type="InterPro" id="IPR027417">
    <property type="entry name" value="P-loop_NTPase"/>
</dbReference>
<dbReference type="NCBIfam" id="NF003122">
    <property type="entry name" value="PRK04040.1"/>
    <property type="match status" value="1"/>
</dbReference>
<dbReference type="Pfam" id="PF13207">
    <property type="entry name" value="AAA_17"/>
    <property type="match status" value="1"/>
</dbReference>
<dbReference type="SUPFAM" id="SSF52540">
    <property type="entry name" value="P-loop containing nucleoside triphosphate hydrolases"/>
    <property type="match status" value="1"/>
</dbReference>
<reference key="1">
    <citation type="journal article" date="2005" name="Genome Res.">
        <title>Complete genome sequence of the hyperthermophilic archaeon Thermococcus kodakaraensis KOD1 and comparison with Pyrococcus genomes.</title>
        <authorList>
            <person name="Fukui T."/>
            <person name="Atomi H."/>
            <person name="Kanai T."/>
            <person name="Matsumi R."/>
            <person name="Fujiwara S."/>
            <person name="Imanaka T."/>
        </authorList>
    </citation>
    <scope>NUCLEOTIDE SEQUENCE [LARGE SCALE GENOMIC DNA]</scope>
    <source>
        <strain>ATCC BAA-918 / JCM 12380 / KOD1</strain>
    </source>
</reference>
<protein>
    <recommendedName>
        <fullName evidence="1">Adenylate kinase</fullName>
        <shortName evidence="1">AK</shortName>
        <ecNumber evidence="1">2.7.4.3</ecNumber>
    </recommendedName>
    <alternativeName>
        <fullName evidence="1">ATP-AMP transphosphorylase</fullName>
    </alternativeName>
</protein>
<accession>Q5JJH2</accession>
<feature type="chain" id="PRO_0000131824" description="Adenylate kinase">
    <location>
        <begin position="1"/>
        <end position="196"/>
    </location>
</feature>
<feature type="binding site" evidence="1">
    <location>
        <begin position="9"/>
        <end position="17"/>
    </location>
    <ligand>
        <name>ATP</name>
        <dbReference type="ChEBI" id="CHEBI:30616"/>
    </ligand>
</feature>
<proteinExistence type="inferred from homology"/>
<name>KADA_THEKO</name>
<comment type="catalytic activity">
    <reaction evidence="1">
        <text>AMP + ATP = 2 ADP</text>
        <dbReference type="Rhea" id="RHEA:12973"/>
        <dbReference type="ChEBI" id="CHEBI:30616"/>
        <dbReference type="ChEBI" id="CHEBI:456215"/>
        <dbReference type="ChEBI" id="CHEBI:456216"/>
        <dbReference type="EC" id="2.7.4.3"/>
    </reaction>
</comment>
<comment type="subcellular location">
    <subcellularLocation>
        <location evidence="1">Cytoplasm</location>
    </subcellularLocation>
</comment>
<comment type="similarity">
    <text evidence="1">Belongs to the archaeal adenylate kinase family.</text>
</comment>
<evidence type="ECO:0000255" key="1">
    <source>
        <dbReference type="HAMAP-Rule" id="MF_00234"/>
    </source>
</evidence>
<keyword id="KW-0067">ATP-binding</keyword>
<keyword id="KW-0963">Cytoplasm</keyword>
<keyword id="KW-0418">Kinase</keyword>
<keyword id="KW-0547">Nucleotide-binding</keyword>
<keyword id="KW-1185">Reference proteome</keyword>
<keyword id="KW-0808">Transferase</keyword>
<organism>
    <name type="scientific">Thermococcus kodakarensis (strain ATCC BAA-918 / JCM 12380 / KOD1)</name>
    <name type="common">Pyrococcus kodakaraensis (strain KOD1)</name>
    <dbReference type="NCBI Taxonomy" id="69014"/>
    <lineage>
        <taxon>Archaea</taxon>
        <taxon>Methanobacteriati</taxon>
        <taxon>Methanobacteriota</taxon>
        <taxon>Thermococci</taxon>
        <taxon>Thermococcales</taxon>
        <taxon>Thermococcaceae</taxon>
        <taxon>Thermococcus</taxon>
    </lineage>
</organism>